<sequence>MNDLALALGLGIPLSLLVGVIIGYFISIKIFKKQIRDNPPITENQIKAMYAKMGRKLSETQVKEIMRSIKNQK</sequence>
<organism>
    <name type="scientific">Mycoplasma pneumoniae (strain ATCC 29342 / M129 / Subtype 1)</name>
    <name type="common">Mycoplasmoides pneumoniae</name>
    <dbReference type="NCBI Taxonomy" id="272634"/>
    <lineage>
        <taxon>Bacteria</taxon>
        <taxon>Bacillati</taxon>
        <taxon>Mycoplasmatota</taxon>
        <taxon>Mycoplasmoidales</taxon>
        <taxon>Mycoplasmoidaceae</taxon>
        <taxon>Mycoplasmoides</taxon>
    </lineage>
</organism>
<gene>
    <name type="ordered locus">MPN_482</name>
    <name type="ORF">MP359.1</name>
</gene>
<dbReference type="EMBL" id="U00089">
    <property type="protein sequence ID" value="AAG34745.1"/>
    <property type="status" value="ALT_INIT"/>
    <property type="molecule type" value="Genomic_DNA"/>
</dbReference>
<dbReference type="RefSeq" id="NP_110170.1">
    <property type="nucleotide sequence ID" value="NC_000912.1"/>
</dbReference>
<dbReference type="RefSeq" id="WP_014574997.1">
    <property type="nucleotide sequence ID" value="NZ_OU342337.1"/>
</dbReference>
<dbReference type="SMR" id="Q9EXD7"/>
<dbReference type="STRING" id="272634.MPN_482"/>
<dbReference type="EnsemblBacteria" id="AAG34745">
    <property type="protein sequence ID" value="AAG34745"/>
    <property type="gene ID" value="MPN_482"/>
</dbReference>
<dbReference type="KEGG" id="mpn:MPN_482"/>
<dbReference type="PATRIC" id="fig|272634.6.peg.521"/>
<dbReference type="HOGENOM" id="CLU_180108_1_0_14"/>
<dbReference type="OrthoDB" id="1769076at2"/>
<dbReference type="Proteomes" id="UP000000808">
    <property type="component" value="Chromosome"/>
</dbReference>
<dbReference type="GO" id="GO:0016020">
    <property type="term" value="C:membrane"/>
    <property type="evidence" value="ECO:0007669"/>
    <property type="project" value="UniProtKB-SubCell"/>
</dbReference>
<dbReference type="HAMAP" id="MF_00363">
    <property type="entry name" value="UPF0154"/>
    <property type="match status" value="1"/>
</dbReference>
<dbReference type="InterPro" id="IPR005359">
    <property type="entry name" value="UPF0154"/>
</dbReference>
<dbReference type="Pfam" id="PF03672">
    <property type="entry name" value="UPF0154"/>
    <property type="match status" value="1"/>
</dbReference>
<accession>Q9EXD7</accession>
<proteinExistence type="inferred from homology"/>
<protein>
    <recommendedName>
        <fullName>UPF0154 protein MG335.1 homolog</fullName>
    </recommendedName>
</protein>
<reference key="1">
    <citation type="journal article" date="1996" name="Nucleic Acids Res.">
        <title>Complete sequence analysis of the genome of the bacterium Mycoplasma pneumoniae.</title>
        <authorList>
            <person name="Himmelreich R."/>
            <person name="Hilbert H."/>
            <person name="Plagens H."/>
            <person name="Pirkl E."/>
            <person name="Li B.-C."/>
            <person name="Herrmann R."/>
        </authorList>
    </citation>
    <scope>NUCLEOTIDE SEQUENCE [LARGE SCALE GENOMIC DNA]</scope>
    <source>
        <strain>ATCC 29342 / M129 / Subtype 1</strain>
    </source>
</reference>
<reference key="2">
    <citation type="journal article" date="2000" name="Nucleic Acids Res.">
        <title>Re-annotating the Mycoplasma pneumoniae genome sequence: adding value, function and reading frames.</title>
        <authorList>
            <person name="Dandekar T."/>
            <person name="Huynen M."/>
            <person name="Regula J.T."/>
            <person name="Ueberle B."/>
            <person name="Zimmermann C.U."/>
            <person name="Andrade M.A."/>
            <person name="Doerks T."/>
            <person name="Sanchez-Pulido L."/>
            <person name="Snel B."/>
            <person name="Suyama M."/>
            <person name="Yuan Y.P."/>
            <person name="Herrmann R."/>
            <person name="Bork P."/>
        </authorList>
    </citation>
    <scope>IDENTIFICATION</scope>
    <source>
        <strain>ATCC 29342 / M129 / Subtype 1</strain>
    </source>
</reference>
<feature type="chain" id="PRO_0000214970" description="UPF0154 protein MG335.1 homolog">
    <location>
        <begin position="1"/>
        <end position="73"/>
    </location>
</feature>
<feature type="transmembrane region" description="Helical" evidence="1">
    <location>
        <begin position="6"/>
        <end position="26"/>
    </location>
</feature>
<comment type="subcellular location">
    <subcellularLocation>
        <location evidence="2">Membrane</location>
        <topology evidence="2">Single-pass membrane protein</topology>
    </subcellularLocation>
</comment>
<comment type="similarity">
    <text evidence="2">Belongs to the UPF0154 family.</text>
</comment>
<comment type="sequence caution" evidence="2">
    <conflict type="erroneous initiation">
        <sequence resource="EMBL-CDS" id="AAG34745"/>
    </conflict>
</comment>
<evidence type="ECO:0000255" key="1"/>
<evidence type="ECO:0000305" key="2"/>
<name>Y482_MYCPN</name>
<keyword id="KW-0472">Membrane</keyword>
<keyword id="KW-1185">Reference proteome</keyword>
<keyword id="KW-0812">Transmembrane</keyword>
<keyword id="KW-1133">Transmembrane helix</keyword>